<geneLocation type="plasmid">
    <name>pYV</name>
</geneLocation>
<geneLocation type="plasmid">
    <name>pYVe227</name>
</geneLocation>
<dbReference type="EMBL" id="U58366">
    <property type="protein sequence ID" value="AAB42204.1"/>
    <property type="molecule type" value="Genomic_DNA"/>
</dbReference>
<dbReference type="EMBL" id="AF102990">
    <property type="protein sequence ID" value="AAD16859.1"/>
    <property type="molecule type" value="Genomic_DNA"/>
</dbReference>
<dbReference type="RefSeq" id="NP_052439.1">
    <property type="nucleotide sequence ID" value="NC_002120.1"/>
</dbReference>
<dbReference type="RefSeq" id="WP_010891245.1">
    <property type="nucleotide sequence ID" value="NZ_KN150737.1"/>
</dbReference>
<dbReference type="SMR" id="P74985"/>
<dbReference type="STRING" id="1443113.LC20_00726"/>
<dbReference type="KEGG" id="yet:CH48_4164"/>
<dbReference type="PATRIC" id="fig|630.129.peg.4415"/>
<dbReference type="GO" id="GO:0005886">
    <property type="term" value="C:plasma membrane"/>
    <property type="evidence" value="ECO:0007669"/>
    <property type="project" value="UniProtKB-SubCell"/>
</dbReference>
<dbReference type="GO" id="GO:0042960">
    <property type="term" value="F:antimonite secondary active transmembrane transporter activity"/>
    <property type="evidence" value="ECO:0007669"/>
    <property type="project" value="TreeGrafter"/>
</dbReference>
<dbReference type="GO" id="GO:0008490">
    <property type="term" value="F:arsenite secondary active transmembrane transporter activity"/>
    <property type="evidence" value="ECO:0007669"/>
    <property type="project" value="TreeGrafter"/>
</dbReference>
<dbReference type="GO" id="GO:0046685">
    <property type="term" value="P:response to arsenic-containing substance"/>
    <property type="evidence" value="ECO:0007669"/>
    <property type="project" value="UniProtKB-KW"/>
</dbReference>
<dbReference type="CDD" id="cd01118">
    <property type="entry name" value="ArsB_permease"/>
    <property type="match status" value="1"/>
</dbReference>
<dbReference type="InterPro" id="IPR000802">
    <property type="entry name" value="Arsenical_pump_ArsB"/>
</dbReference>
<dbReference type="NCBIfam" id="TIGR00935">
    <property type="entry name" value="2a45"/>
    <property type="match status" value="1"/>
</dbReference>
<dbReference type="NCBIfam" id="NF011980">
    <property type="entry name" value="PRK15445.1"/>
    <property type="match status" value="1"/>
</dbReference>
<dbReference type="PANTHER" id="PTHR43302">
    <property type="entry name" value="TRANSPORTER ARSB-RELATED"/>
    <property type="match status" value="1"/>
</dbReference>
<dbReference type="PANTHER" id="PTHR43302:SF5">
    <property type="entry name" value="TRANSPORTER ARSB-RELATED"/>
    <property type="match status" value="1"/>
</dbReference>
<dbReference type="Pfam" id="PF02040">
    <property type="entry name" value="ArsB"/>
    <property type="match status" value="1"/>
</dbReference>
<dbReference type="PRINTS" id="PR00758">
    <property type="entry name" value="ARSENICPUMP"/>
</dbReference>
<feature type="chain" id="PRO_0000201480" description="Arsenical pump membrane protein">
    <location>
        <begin position="1"/>
        <end position="429"/>
    </location>
</feature>
<feature type="transmembrane region" description="Helical" evidence="2">
    <location>
        <begin position="21"/>
        <end position="41"/>
    </location>
</feature>
<feature type="transmembrane region" description="Helical" evidence="2">
    <location>
        <begin position="46"/>
        <end position="66"/>
    </location>
</feature>
<feature type="transmembrane region" description="Helical" evidence="2">
    <location>
        <begin position="98"/>
        <end position="118"/>
    </location>
</feature>
<feature type="transmembrane region" description="Helical" evidence="2">
    <location>
        <begin position="136"/>
        <end position="156"/>
    </location>
</feature>
<feature type="transmembrane region" description="Helical" evidence="2">
    <location>
        <begin position="178"/>
        <end position="198"/>
    </location>
</feature>
<feature type="transmembrane region" description="Helical" evidence="2">
    <location>
        <begin position="228"/>
        <end position="248"/>
    </location>
</feature>
<feature type="transmembrane region" description="Helical" evidence="2">
    <location>
        <begin position="249"/>
        <end position="269"/>
    </location>
</feature>
<feature type="transmembrane region" description="Helical" evidence="2">
    <location>
        <begin position="274"/>
        <end position="294"/>
    </location>
</feature>
<feature type="transmembrane region" description="Helical" evidence="2">
    <location>
        <begin position="316"/>
        <end position="336"/>
    </location>
</feature>
<feature type="transmembrane region" description="Helical" evidence="2">
    <location>
        <begin position="337"/>
        <end position="357"/>
    </location>
</feature>
<feature type="transmembrane region" description="Helical" evidence="2">
    <location>
        <begin position="371"/>
        <end position="391"/>
    </location>
</feature>
<feature type="transmembrane region" description="Helical" evidence="2">
    <location>
        <begin position="407"/>
        <end position="427"/>
    </location>
</feature>
<evidence type="ECO:0000250" key="1"/>
<evidence type="ECO:0000255" key="2"/>
<evidence type="ECO:0000305" key="3"/>
<accession>P74985</accession>
<comment type="function">
    <text evidence="1">Involved in arsenical resistance. Thought to form the channel of an arsenite pump (By similarity).</text>
</comment>
<comment type="subcellular location">
    <subcellularLocation>
        <location evidence="3">Cell inner membrane</location>
        <topology evidence="3">Multi-pass membrane protein</topology>
    </subcellularLocation>
</comment>
<comment type="similarity">
    <text evidence="3">Belongs to the ArsB family.</text>
</comment>
<gene>
    <name type="primary">arsB</name>
</gene>
<keyword id="KW-0059">Arsenical resistance</keyword>
<keyword id="KW-0997">Cell inner membrane</keyword>
<keyword id="KW-1003">Cell membrane</keyword>
<keyword id="KW-0472">Membrane</keyword>
<keyword id="KW-0614">Plasmid</keyword>
<keyword id="KW-0812">Transmembrane</keyword>
<keyword id="KW-1133">Transmembrane helix</keyword>
<keyword id="KW-0813">Transport</keyword>
<keyword id="KW-0814">Transposable element</keyword>
<protein>
    <recommendedName>
        <fullName>Arsenical pump membrane protein</fullName>
    </recommendedName>
    <alternativeName>
        <fullName>Arsenic efflux pump protein</fullName>
    </alternativeName>
</protein>
<reference key="1">
    <citation type="journal article" date="1997" name="J. Bacteriol.">
        <title>Virulence and arsenic resistance in Yersiniae.</title>
        <authorList>
            <person name="Neyt C."/>
            <person name="Iriarte M."/>
            <person name="Thi V.H."/>
            <person name="Cornelis G.R."/>
        </authorList>
    </citation>
    <scope>NUCLEOTIDE SEQUENCE [GENOMIC DNA]</scope>
    <source>
        <strain>439-80 / Serotype O:9</strain>
        <plasmid>pYV</plasmid>
        <transposon>Tn2502</transposon>
    </source>
</reference>
<reference key="2">
    <citation type="submission" date="1998-10" db="EMBL/GenBank/DDBJ databases">
        <title>Detailed genetic map of the pYVe227 plasmid of Yersinia enterocolitica serotype O:9.</title>
        <authorList>
            <person name="Iriarte M."/>
            <person name="Lambermont I."/>
            <person name="Kerbourch C."/>
            <person name="Cornelis G.R."/>
        </authorList>
    </citation>
    <scope>NUCLEOTIDE SEQUENCE [GENOMIC DNA]</scope>
    <source>
        <strain>W22703 / Serotype O:9 / Biotype 2</strain>
        <plasmid>pYVe227</plasmid>
    </source>
</reference>
<proteinExistence type="inferred from homology"/>
<organism>
    <name type="scientific">Yersinia enterocolitica</name>
    <dbReference type="NCBI Taxonomy" id="630"/>
    <lineage>
        <taxon>Bacteria</taxon>
        <taxon>Pseudomonadati</taxon>
        <taxon>Pseudomonadota</taxon>
        <taxon>Gammaproteobacteria</taxon>
        <taxon>Enterobacterales</taxon>
        <taxon>Yersiniaceae</taxon>
        <taxon>Yersinia</taxon>
    </lineage>
</organism>
<name>ARSB_YEREN</name>
<sequence length="429" mass="45497">MLLAGSIFVLTLILAIWQPRGLSIGWSASICAALALVSGVIHVGDIPVVWNIVWNATATFIAVIIISLLLDESGFFEWAALHVSRWGNGRGRLLFTWIVLLGAAVAALFANDGAALILTPIVIAMLLALGFSKRTTLAFVMAAGFIADTASLPLIVSNLVNIVSADFFRLGFTEYASVMLPVDIAAIAATLGMLHLFFRRDIPATYDVSLLKMPASAIKDPATFRAGWIVLVLLLVGFFVLEPLGIPVSAIAAVGTVVLFAVAKKGHAINTGKVLRGAPWQIVVFSLGMYLVVYGLRNAGLTEYLSGVLNMLADKGLLAATFGTGFLTAFLSSVMNNMPTVLVGALSIDGSTASGVIKEAMIYANVIGCDLGPKITPIGSLATLLWLHVLSQKNMTISWGYYFRTGIIMTLPVLFVTLAALALRLSVTL</sequence>